<dbReference type="EC" id="1.17.99.9" evidence="1"/>
<dbReference type="EMBL" id="CP000031">
    <property type="protein sequence ID" value="AAV95325.2"/>
    <property type="molecule type" value="Genomic_DNA"/>
</dbReference>
<dbReference type="RefSeq" id="WP_030003217.1">
    <property type="nucleotide sequence ID" value="NC_003911.12"/>
</dbReference>
<dbReference type="SMR" id="Q5LRS1"/>
<dbReference type="STRING" id="246200.SPO2054"/>
<dbReference type="PaxDb" id="246200-SPO2054"/>
<dbReference type="KEGG" id="sil:SPO2054"/>
<dbReference type="eggNOG" id="COG1612">
    <property type="taxonomic scope" value="Bacteria"/>
</dbReference>
<dbReference type="HOGENOM" id="CLU_017627_0_0_5"/>
<dbReference type="OrthoDB" id="9793156at2"/>
<dbReference type="UniPathway" id="UPA00269">
    <property type="reaction ID" value="UER00713"/>
</dbReference>
<dbReference type="Proteomes" id="UP000001023">
    <property type="component" value="Chromosome"/>
</dbReference>
<dbReference type="GO" id="GO:0005886">
    <property type="term" value="C:plasma membrane"/>
    <property type="evidence" value="ECO:0007669"/>
    <property type="project" value="UniProtKB-SubCell"/>
</dbReference>
<dbReference type="GO" id="GO:0046872">
    <property type="term" value="F:metal ion binding"/>
    <property type="evidence" value="ECO:0007669"/>
    <property type="project" value="UniProtKB-KW"/>
</dbReference>
<dbReference type="GO" id="GO:0016653">
    <property type="term" value="F:oxidoreductase activity, acting on NAD(P)H, heme protein as acceptor"/>
    <property type="evidence" value="ECO:0007669"/>
    <property type="project" value="InterPro"/>
</dbReference>
<dbReference type="GO" id="GO:0006784">
    <property type="term" value="P:heme A biosynthetic process"/>
    <property type="evidence" value="ECO:0007669"/>
    <property type="project" value="UniProtKB-UniRule"/>
</dbReference>
<dbReference type="HAMAP" id="MF_01665">
    <property type="entry name" value="HemeA_synth_type2"/>
    <property type="match status" value="1"/>
</dbReference>
<dbReference type="InterPro" id="IPR003780">
    <property type="entry name" value="COX15/CtaA_fam"/>
</dbReference>
<dbReference type="InterPro" id="IPR054616">
    <property type="entry name" value="HemA_synt_rhodobact"/>
</dbReference>
<dbReference type="InterPro" id="IPR023754">
    <property type="entry name" value="HemeA_Synthase_type2"/>
</dbReference>
<dbReference type="NCBIfam" id="NF045570">
    <property type="entry name" value="HemSynCtaAAlphapr"/>
    <property type="match status" value="1"/>
</dbReference>
<dbReference type="PANTHER" id="PTHR23289">
    <property type="entry name" value="CYTOCHROME C OXIDASE ASSEMBLY PROTEIN COX15"/>
    <property type="match status" value="1"/>
</dbReference>
<dbReference type="PANTHER" id="PTHR23289:SF2">
    <property type="entry name" value="CYTOCHROME C OXIDASE ASSEMBLY PROTEIN COX15 HOMOLOG"/>
    <property type="match status" value="1"/>
</dbReference>
<dbReference type="Pfam" id="PF02628">
    <property type="entry name" value="COX15-CtaA"/>
    <property type="match status" value="1"/>
</dbReference>
<organism>
    <name type="scientific">Ruegeria pomeroyi (strain ATCC 700808 / DSM 15171 / DSS-3)</name>
    <name type="common">Silicibacter pomeroyi</name>
    <dbReference type="NCBI Taxonomy" id="246200"/>
    <lineage>
        <taxon>Bacteria</taxon>
        <taxon>Pseudomonadati</taxon>
        <taxon>Pseudomonadota</taxon>
        <taxon>Alphaproteobacteria</taxon>
        <taxon>Rhodobacterales</taxon>
        <taxon>Roseobacteraceae</taxon>
        <taxon>Ruegeria</taxon>
    </lineage>
</organism>
<protein>
    <recommendedName>
        <fullName evidence="1">Heme A synthase</fullName>
        <shortName evidence="1">HAS</shortName>
        <ecNumber evidence="1">1.17.99.9</ecNumber>
    </recommendedName>
    <alternativeName>
        <fullName evidence="1">Cytochrome aa3-controlling protein</fullName>
    </alternativeName>
</protein>
<comment type="function">
    <text evidence="1">Catalyzes the conversion of heme O to heme A by two successive hydroxylations of the methyl group at C8. The first hydroxylation forms heme I, the second hydroxylation results in an unstable dihydroxymethyl group, which spontaneously dehydrates, resulting in the formyl group of heme A.</text>
</comment>
<comment type="catalytic activity">
    <reaction evidence="1">
        <text>Fe(II)-heme o + 2 A + H2O = Fe(II)-heme a + 2 AH2</text>
        <dbReference type="Rhea" id="RHEA:63388"/>
        <dbReference type="ChEBI" id="CHEBI:13193"/>
        <dbReference type="ChEBI" id="CHEBI:15377"/>
        <dbReference type="ChEBI" id="CHEBI:17499"/>
        <dbReference type="ChEBI" id="CHEBI:60530"/>
        <dbReference type="ChEBI" id="CHEBI:61715"/>
        <dbReference type="EC" id="1.17.99.9"/>
    </reaction>
    <physiologicalReaction direction="left-to-right" evidence="1">
        <dbReference type="Rhea" id="RHEA:63389"/>
    </physiologicalReaction>
</comment>
<comment type="cofactor">
    <cofactor evidence="1">
        <name>heme b</name>
        <dbReference type="ChEBI" id="CHEBI:60344"/>
    </cofactor>
</comment>
<comment type="pathway">
    <text evidence="1">Porphyrin-containing compound metabolism; heme A biosynthesis; heme A from heme O: step 1/1.</text>
</comment>
<comment type="subunit">
    <text evidence="1">Interacts with CtaB.</text>
</comment>
<comment type="subcellular location">
    <subcellularLocation>
        <location evidence="1">Cell membrane</location>
        <topology evidence="1">Multi-pass membrane protein</topology>
    </subcellularLocation>
</comment>
<comment type="similarity">
    <text evidence="1">Belongs to the COX15/CtaA family. Type 2 subfamily.</text>
</comment>
<gene>
    <name evidence="1" type="primary">ctaA</name>
    <name type="ordered locus">SPO2054</name>
</gene>
<proteinExistence type="inferred from homology"/>
<sequence>MSSKRSIFEEVSDGARAAAAQPGMIDRGRGGARGAIRAWLAVLFALVVAMIVVGGLTRLTDSGLSITEWRPVTGAIPPLSEADWQAEFDKYKQIDQWRLQNQWMELADFKSIYWWEWGHRQLGRVIGLVWALGFFGFLLARKIPAGWTGRLILPGVLGGVQGAVGAWMVASGITQGEGMTSVASYRLATHLGLAFVILGLLAWSILQLGRSERDLMQARRTKEARLFGLATGWLHLAFLQILIGALVAGLDAGRNYVDWPLMAGQVIPPDPLELSPLWRNFFENPGLVQFIHRIVGYLLLAYGVMVWLRGRRSAHAQTRFAFNAGFAALSLQVVLGIVTVLYAAPWQIAILHQLLAVGVFVLILRARFLCAYPIATSIRG</sequence>
<accession>Q5LRS1</accession>
<reference key="1">
    <citation type="journal article" date="2004" name="Nature">
        <title>Genome sequence of Silicibacter pomeroyi reveals adaptations to the marine environment.</title>
        <authorList>
            <person name="Moran M.A."/>
            <person name="Buchan A."/>
            <person name="Gonzalez J.M."/>
            <person name="Heidelberg J.F."/>
            <person name="Whitman W.B."/>
            <person name="Kiene R.P."/>
            <person name="Henriksen J.R."/>
            <person name="King G.M."/>
            <person name="Belas R."/>
            <person name="Fuqua C."/>
            <person name="Brinkac L.M."/>
            <person name="Lewis M."/>
            <person name="Johri S."/>
            <person name="Weaver B."/>
            <person name="Pai G."/>
            <person name="Eisen J.A."/>
            <person name="Rahe E."/>
            <person name="Sheldon W.M."/>
            <person name="Ye W."/>
            <person name="Miller T.R."/>
            <person name="Carlton J."/>
            <person name="Rasko D.A."/>
            <person name="Paulsen I.T."/>
            <person name="Ren Q."/>
            <person name="Daugherty S.C."/>
            <person name="DeBoy R.T."/>
            <person name="Dodson R.J."/>
            <person name="Durkin A.S."/>
            <person name="Madupu R."/>
            <person name="Nelson W.C."/>
            <person name="Sullivan S.A."/>
            <person name="Rosovitz M.J."/>
            <person name="Haft D.H."/>
            <person name="Selengut J."/>
            <person name="Ward N."/>
        </authorList>
    </citation>
    <scope>NUCLEOTIDE SEQUENCE [LARGE SCALE GENOMIC DNA]</scope>
    <source>
        <strain>ATCC 700808 / DSM 15171 / DSS-3</strain>
    </source>
</reference>
<reference key="2">
    <citation type="journal article" date="2014" name="Stand. Genomic Sci.">
        <title>An updated genome annotation for the model marine bacterium Ruegeria pomeroyi DSS-3.</title>
        <authorList>
            <person name="Rivers A.R."/>
            <person name="Smith C.B."/>
            <person name="Moran M.A."/>
        </authorList>
    </citation>
    <scope>GENOME REANNOTATION</scope>
    <source>
        <strain>ATCC 700808 / DSM 15171 / DSS-3</strain>
    </source>
</reference>
<keyword id="KW-1003">Cell membrane</keyword>
<keyword id="KW-0350">Heme biosynthesis</keyword>
<keyword id="KW-0408">Iron</keyword>
<keyword id="KW-0472">Membrane</keyword>
<keyword id="KW-0479">Metal-binding</keyword>
<keyword id="KW-0560">Oxidoreductase</keyword>
<keyword id="KW-1185">Reference proteome</keyword>
<keyword id="KW-0812">Transmembrane</keyword>
<keyword id="KW-1133">Transmembrane helix</keyword>
<evidence type="ECO:0000255" key="1">
    <source>
        <dbReference type="HAMAP-Rule" id="MF_01665"/>
    </source>
</evidence>
<feature type="chain" id="PRO_0000349082" description="Heme A synthase">
    <location>
        <begin position="1"/>
        <end position="380"/>
    </location>
</feature>
<feature type="transmembrane region" description="Helical" evidence="1">
    <location>
        <begin position="36"/>
        <end position="56"/>
    </location>
</feature>
<feature type="transmembrane region" description="Helical" evidence="1">
    <location>
        <begin position="125"/>
        <end position="145"/>
    </location>
</feature>
<feature type="transmembrane region" description="Helical" evidence="1">
    <location>
        <begin position="151"/>
        <end position="171"/>
    </location>
</feature>
<feature type="transmembrane region" description="Helical" evidence="1">
    <location>
        <begin position="187"/>
        <end position="207"/>
    </location>
</feature>
<feature type="transmembrane region" description="Helical" evidence="1">
    <location>
        <begin position="227"/>
        <end position="247"/>
    </location>
</feature>
<feature type="transmembrane region" description="Helical" evidence="1">
    <location>
        <begin position="287"/>
        <end position="307"/>
    </location>
</feature>
<feature type="transmembrane region" description="Helical" evidence="1">
    <location>
        <begin position="320"/>
        <end position="340"/>
    </location>
</feature>
<feature type="transmembrane region" description="Helical" evidence="1">
    <location>
        <begin position="344"/>
        <end position="364"/>
    </location>
</feature>
<feature type="binding site" description="axial binding residue" evidence="1">
    <location>
        <position position="292"/>
    </location>
    <ligand>
        <name>heme</name>
        <dbReference type="ChEBI" id="CHEBI:30413"/>
    </ligand>
    <ligandPart>
        <name>Fe</name>
        <dbReference type="ChEBI" id="CHEBI:18248"/>
    </ligandPart>
</feature>
<feature type="binding site" description="axial binding residue" evidence="1">
    <location>
        <position position="352"/>
    </location>
    <ligand>
        <name>heme</name>
        <dbReference type="ChEBI" id="CHEBI:30413"/>
    </ligand>
    <ligandPart>
        <name>Fe</name>
        <dbReference type="ChEBI" id="CHEBI:18248"/>
    </ligandPart>
</feature>
<name>CTAA_RUEPO</name>